<gene>
    <name evidence="2" type="primary">rpsL</name>
    <name type="ordered locus">Patl_0600</name>
</gene>
<accession>Q15YA9</accession>
<keyword id="KW-0488">Methylation</keyword>
<keyword id="KW-0687">Ribonucleoprotein</keyword>
<keyword id="KW-0689">Ribosomal protein</keyword>
<keyword id="KW-0694">RNA-binding</keyword>
<keyword id="KW-0699">rRNA-binding</keyword>
<keyword id="KW-0820">tRNA-binding</keyword>
<feature type="chain" id="PRO_0000263575" description="Small ribosomal subunit protein uS12">
    <location>
        <begin position="1"/>
        <end position="124"/>
    </location>
</feature>
<feature type="region of interest" description="Disordered" evidence="3">
    <location>
        <begin position="1"/>
        <end position="22"/>
    </location>
</feature>
<feature type="modified residue" description="3-methylthioaspartic acid" evidence="1">
    <location>
        <position position="89"/>
    </location>
</feature>
<sequence>MATVNQLVRKPRQKPDAKSNVAALQACPQRRGVCTRVYTTTPKKPNSALRKVCRVRLTNGFEVSSYIGGEGHNLQEHSVVLIRGGRVKDLPGVRYHTVRGTLDCAGVSSRKQARSKYGAKRPKS</sequence>
<protein>
    <recommendedName>
        <fullName evidence="2">Small ribosomal subunit protein uS12</fullName>
    </recommendedName>
    <alternativeName>
        <fullName evidence="4">30S ribosomal protein S12</fullName>
    </alternativeName>
</protein>
<proteinExistence type="inferred from homology"/>
<name>RS12_PSEA6</name>
<reference key="1">
    <citation type="submission" date="2006-06" db="EMBL/GenBank/DDBJ databases">
        <title>Complete sequence of Pseudoalteromonas atlantica T6c.</title>
        <authorList>
            <consortium name="US DOE Joint Genome Institute"/>
            <person name="Copeland A."/>
            <person name="Lucas S."/>
            <person name="Lapidus A."/>
            <person name="Barry K."/>
            <person name="Detter J.C."/>
            <person name="Glavina del Rio T."/>
            <person name="Hammon N."/>
            <person name="Israni S."/>
            <person name="Dalin E."/>
            <person name="Tice H."/>
            <person name="Pitluck S."/>
            <person name="Saunders E."/>
            <person name="Brettin T."/>
            <person name="Bruce D."/>
            <person name="Han C."/>
            <person name="Tapia R."/>
            <person name="Gilna P."/>
            <person name="Schmutz J."/>
            <person name="Larimer F."/>
            <person name="Land M."/>
            <person name="Hauser L."/>
            <person name="Kyrpides N."/>
            <person name="Kim E."/>
            <person name="Karls A.C."/>
            <person name="Bartlett D."/>
            <person name="Higgins B.P."/>
            <person name="Richardson P."/>
        </authorList>
    </citation>
    <scope>NUCLEOTIDE SEQUENCE [LARGE SCALE GENOMIC DNA]</scope>
    <source>
        <strain>T6c / ATCC BAA-1087</strain>
    </source>
</reference>
<evidence type="ECO:0000250" key="1"/>
<evidence type="ECO:0000255" key="2">
    <source>
        <dbReference type="HAMAP-Rule" id="MF_00403"/>
    </source>
</evidence>
<evidence type="ECO:0000256" key="3">
    <source>
        <dbReference type="SAM" id="MobiDB-lite"/>
    </source>
</evidence>
<evidence type="ECO:0000305" key="4"/>
<organism>
    <name type="scientific">Pseudoalteromonas atlantica (strain T6c / ATCC BAA-1087)</name>
    <dbReference type="NCBI Taxonomy" id="3042615"/>
    <lineage>
        <taxon>Bacteria</taxon>
        <taxon>Pseudomonadati</taxon>
        <taxon>Pseudomonadota</taxon>
        <taxon>Gammaproteobacteria</taxon>
        <taxon>Alteromonadales</taxon>
        <taxon>Alteromonadaceae</taxon>
        <taxon>Paraglaciecola</taxon>
    </lineage>
</organism>
<dbReference type="EMBL" id="CP000388">
    <property type="protein sequence ID" value="ABG39129.1"/>
    <property type="molecule type" value="Genomic_DNA"/>
</dbReference>
<dbReference type="RefSeq" id="WP_006992809.1">
    <property type="nucleotide sequence ID" value="NC_008228.1"/>
</dbReference>
<dbReference type="SMR" id="Q15YA9"/>
<dbReference type="STRING" id="342610.Patl_0600"/>
<dbReference type="KEGG" id="pat:Patl_0600"/>
<dbReference type="eggNOG" id="COG0048">
    <property type="taxonomic scope" value="Bacteria"/>
</dbReference>
<dbReference type="HOGENOM" id="CLU_104295_1_2_6"/>
<dbReference type="OrthoDB" id="9802366at2"/>
<dbReference type="Proteomes" id="UP000001981">
    <property type="component" value="Chromosome"/>
</dbReference>
<dbReference type="GO" id="GO:0015935">
    <property type="term" value="C:small ribosomal subunit"/>
    <property type="evidence" value="ECO:0007669"/>
    <property type="project" value="InterPro"/>
</dbReference>
<dbReference type="GO" id="GO:0019843">
    <property type="term" value="F:rRNA binding"/>
    <property type="evidence" value="ECO:0007669"/>
    <property type="project" value="UniProtKB-UniRule"/>
</dbReference>
<dbReference type="GO" id="GO:0003735">
    <property type="term" value="F:structural constituent of ribosome"/>
    <property type="evidence" value="ECO:0007669"/>
    <property type="project" value="InterPro"/>
</dbReference>
<dbReference type="GO" id="GO:0000049">
    <property type="term" value="F:tRNA binding"/>
    <property type="evidence" value="ECO:0007669"/>
    <property type="project" value="UniProtKB-UniRule"/>
</dbReference>
<dbReference type="GO" id="GO:0006412">
    <property type="term" value="P:translation"/>
    <property type="evidence" value="ECO:0007669"/>
    <property type="project" value="UniProtKB-UniRule"/>
</dbReference>
<dbReference type="CDD" id="cd03368">
    <property type="entry name" value="Ribosomal_S12"/>
    <property type="match status" value="1"/>
</dbReference>
<dbReference type="FunFam" id="2.40.50.140:FF:000001">
    <property type="entry name" value="30S ribosomal protein S12"/>
    <property type="match status" value="1"/>
</dbReference>
<dbReference type="Gene3D" id="2.40.50.140">
    <property type="entry name" value="Nucleic acid-binding proteins"/>
    <property type="match status" value="1"/>
</dbReference>
<dbReference type="HAMAP" id="MF_00403_B">
    <property type="entry name" value="Ribosomal_uS12_B"/>
    <property type="match status" value="1"/>
</dbReference>
<dbReference type="InterPro" id="IPR012340">
    <property type="entry name" value="NA-bd_OB-fold"/>
</dbReference>
<dbReference type="InterPro" id="IPR006032">
    <property type="entry name" value="Ribosomal_uS12"/>
</dbReference>
<dbReference type="InterPro" id="IPR005679">
    <property type="entry name" value="Ribosomal_uS12_bac"/>
</dbReference>
<dbReference type="NCBIfam" id="TIGR00981">
    <property type="entry name" value="rpsL_bact"/>
    <property type="match status" value="1"/>
</dbReference>
<dbReference type="PANTHER" id="PTHR11652">
    <property type="entry name" value="30S RIBOSOMAL PROTEIN S12 FAMILY MEMBER"/>
    <property type="match status" value="1"/>
</dbReference>
<dbReference type="Pfam" id="PF00164">
    <property type="entry name" value="Ribosom_S12_S23"/>
    <property type="match status" value="1"/>
</dbReference>
<dbReference type="PIRSF" id="PIRSF002133">
    <property type="entry name" value="Ribosomal_S12/S23"/>
    <property type="match status" value="1"/>
</dbReference>
<dbReference type="PRINTS" id="PR01034">
    <property type="entry name" value="RIBOSOMALS12"/>
</dbReference>
<dbReference type="SUPFAM" id="SSF50249">
    <property type="entry name" value="Nucleic acid-binding proteins"/>
    <property type="match status" value="1"/>
</dbReference>
<dbReference type="PROSITE" id="PS00055">
    <property type="entry name" value="RIBOSOMAL_S12"/>
    <property type="match status" value="1"/>
</dbReference>
<comment type="function">
    <text evidence="2">With S4 and S5 plays an important role in translational accuracy.</text>
</comment>
<comment type="function">
    <text evidence="2">Interacts with and stabilizes bases of the 16S rRNA that are involved in tRNA selection in the A site and with the mRNA backbone. Located at the interface of the 30S and 50S subunits, it traverses the body of the 30S subunit contacting proteins on the other side and probably holding the rRNA structure together. The combined cluster of proteins S8, S12 and S17 appears to hold together the shoulder and platform of the 30S subunit.</text>
</comment>
<comment type="subunit">
    <text evidence="2">Part of the 30S ribosomal subunit. Contacts proteins S8 and S17. May interact with IF1 in the 30S initiation complex.</text>
</comment>
<comment type="similarity">
    <text evidence="2">Belongs to the universal ribosomal protein uS12 family.</text>
</comment>